<evidence type="ECO:0000255" key="1">
    <source>
        <dbReference type="HAMAP-Rule" id="MF_00444"/>
    </source>
</evidence>
<comment type="function">
    <text evidence="1">Cleaves peptides in various proteins in a process that requires ATP hydrolysis. Has a chymotrypsin-like activity. Plays a major role in the degradation of misfolded proteins.</text>
</comment>
<comment type="catalytic activity">
    <reaction evidence="1">
        <text>Hydrolysis of proteins to small peptides in the presence of ATP and magnesium. alpha-casein is the usual test substrate. In the absence of ATP, only oligopeptides shorter than five residues are hydrolyzed (such as succinyl-Leu-Tyr-|-NHMec, and Leu-Tyr-Leu-|-Tyr-Trp, in which cleavage of the -Tyr-|-Leu- and -Tyr-|-Trp bonds also occurs).</text>
        <dbReference type="EC" id="3.4.21.92"/>
    </reaction>
</comment>
<comment type="subunit">
    <text evidence="1">Fourteen ClpP subunits assemble into 2 heptameric rings which stack back to back to give a disk-like structure with a central cavity, resembling the structure of eukaryotic proteasomes.</text>
</comment>
<comment type="subcellular location">
    <subcellularLocation>
        <location evidence="1">Cytoplasm</location>
    </subcellularLocation>
</comment>
<comment type="similarity">
    <text evidence="1">Belongs to the peptidase S14 family.</text>
</comment>
<proteinExistence type="inferred from homology"/>
<name>CLPP_SHEB2</name>
<gene>
    <name evidence="1" type="primary">clpP</name>
    <name type="ordered locus">Sbal223_2750</name>
</gene>
<protein>
    <recommendedName>
        <fullName evidence="1">ATP-dependent Clp protease proteolytic subunit</fullName>
        <ecNumber evidence="1">3.4.21.92</ecNumber>
    </recommendedName>
    <alternativeName>
        <fullName evidence="1">Endopeptidase Clp</fullName>
    </alternativeName>
</protein>
<feature type="chain" id="PRO_1000135163" description="ATP-dependent Clp protease proteolytic subunit">
    <location>
        <begin position="1"/>
        <end position="202"/>
    </location>
</feature>
<feature type="active site" description="Nucleophile" evidence="1">
    <location>
        <position position="106"/>
    </location>
</feature>
<feature type="active site" evidence="1">
    <location>
        <position position="131"/>
    </location>
</feature>
<sequence>MHNASDIQSALVPMVIEQTAKGERSYDIYSRLLKERIIFLVGQVEEHMANLIVAQLLFLESESPDKDIFLYINSPGGSVTAGMAIYDTMQFIKPNVSTVCIGQAASMGAFLLAGGEKGKRHCLPNSRVMIHQPLGGFQGQASDIAIHAKEILGIKNKLNQMLAEHTGQPLEVVERDTDRDNFMSATQAVEYGLVDSVMTKRG</sequence>
<accession>B8E5E9</accession>
<reference key="1">
    <citation type="submission" date="2008-12" db="EMBL/GenBank/DDBJ databases">
        <title>Complete sequence of chromosome of Shewanella baltica OS223.</title>
        <authorList>
            <consortium name="US DOE Joint Genome Institute"/>
            <person name="Lucas S."/>
            <person name="Copeland A."/>
            <person name="Lapidus A."/>
            <person name="Glavina del Rio T."/>
            <person name="Dalin E."/>
            <person name="Tice H."/>
            <person name="Bruce D."/>
            <person name="Goodwin L."/>
            <person name="Pitluck S."/>
            <person name="Chertkov O."/>
            <person name="Meincke L."/>
            <person name="Brettin T."/>
            <person name="Detter J.C."/>
            <person name="Han C."/>
            <person name="Kuske C.R."/>
            <person name="Larimer F."/>
            <person name="Land M."/>
            <person name="Hauser L."/>
            <person name="Kyrpides N."/>
            <person name="Ovchinnikova G."/>
            <person name="Brettar I."/>
            <person name="Rodrigues J."/>
            <person name="Konstantinidis K."/>
            <person name="Tiedje J."/>
        </authorList>
    </citation>
    <scope>NUCLEOTIDE SEQUENCE [LARGE SCALE GENOMIC DNA]</scope>
    <source>
        <strain>OS223</strain>
    </source>
</reference>
<organism>
    <name type="scientific">Shewanella baltica (strain OS223)</name>
    <dbReference type="NCBI Taxonomy" id="407976"/>
    <lineage>
        <taxon>Bacteria</taxon>
        <taxon>Pseudomonadati</taxon>
        <taxon>Pseudomonadota</taxon>
        <taxon>Gammaproteobacteria</taxon>
        <taxon>Alteromonadales</taxon>
        <taxon>Shewanellaceae</taxon>
        <taxon>Shewanella</taxon>
    </lineage>
</organism>
<dbReference type="EC" id="3.4.21.92" evidence="1"/>
<dbReference type="EMBL" id="CP001252">
    <property type="protein sequence ID" value="ACK47238.1"/>
    <property type="molecule type" value="Genomic_DNA"/>
</dbReference>
<dbReference type="RefSeq" id="WP_006081124.1">
    <property type="nucleotide sequence ID" value="NC_011663.1"/>
</dbReference>
<dbReference type="SMR" id="B8E5E9"/>
<dbReference type="MEROPS" id="S14.001"/>
<dbReference type="GeneID" id="11771862"/>
<dbReference type="KEGG" id="sbp:Sbal223_2750"/>
<dbReference type="HOGENOM" id="CLU_058707_3_2_6"/>
<dbReference type="Proteomes" id="UP000002507">
    <property type="component" value="Chromosome"/>
</dbReference>
<dbReference type="GO" id="GO:0005737">
    <property type="term" value="C:cytoplasm"/>
    <property type="evidence" value="ECO:0007669"/>
    <property type="project" value="UniProtKB-SubCell"/>
</dbReference>
<dbReference type="GO" id="GO:0009368">
    <property type="term" value="C:endopeptidase Clp complex"/>
    <property type="evidence" value="ECO:0007669"/>
    <property type="project" value="TreeGrafter"/>
</dbReference>
<dbReference type="GO" id="GO:0004176">
    <property type="term" value="F:ATP-dependent peptidase activity"/>
    <property type="evidence" value="ECO:0007669"/>
    <property type="project" value="InterPro"/>
</dbReference>
<dbReference type="GO" id="GO:0051117">
    <property type="term" value="F:ATPase binding"/>
    <property type="evidence" value="ECO:0007669"/>
    <property type="project" value="TreeGrafter"/>
</dbReference>
<dbReference type="GO" id="GO:0004252">
    <property type="term" value="F:serine-type endopeptidase activity"/>
    <property type="evidence" value="ECO:0007669"/>
    <property type="project" value="UniProtKB-UniRule"/>
</dbReference>
<dbReference type="GO" id="GO:0006515">
    <property type="term" value="P:protein quality control for misfolded or incompletely synthesized proteins"/>
    <property type="evidence" value="ECO:0007669"/>
    <property type="project" value="TreeGrafter"/>
</dbReference>
<dbReference type="CDD" id="cd07017">
    <property type="entry name" value="S14_ClpP_2"/>
    <property type="match status" value="1"/>
</dbReference>
<dbReference type="FunFam" id="3.90.226.10:FF:000001">
    <property type="entry name" value="ATP-dependent Clp protease proteolytic subunit"/>
    <property type="match status" value="1"/>
</dbReference>
<dbReference type="Gene3D" id="3.90.226.10">
    <property type="entry name" value="2-enoyl-CoA Hydratase, Chain A, domain 1"/>
    <property type="match status" value="1"/>
</dbReference>
<dbReference type="HAMAP" id="MF_00444">
    <property type="entry name" value="ClpP"/>
    <property type="match status" value="1"/>
</dbReference>
<dbReference type="InterPro" id="IPR001907">
    <property type="entry name" value="ClpP"/>
</dbReference>
<dbReference type="InterPro" id="IPR029045">
    <property type="entry name" value="ClpP/crotonase-like_dom_sf"/>
</dbReference>
<dbReference type="InterPro" id="IPR023562">
    <property type="entry name" value="ClpP/TepA"/>
</dbReference>
<dbReference type="InterPro" id="IPR033135">
    <property type="entry name" value="ClpP_His_AS"/>
</dbReference>
<dbReference type="InterPro" id="IPR018215">
    <property type="entry name" value="ClpP_Ser_AS"/>
</dbReference>
<dbReference type="NCBIfam" id="TIGR00493">
    <property type="entry name" value="clpP"/>
    <property type="match status" value="1"/>
</dbReference>
<dbReference type="NCBIfam" id="NF001368">
    <property type="entry name" value="PRK00277.1"/>
    <property type="match status" value="1"/>
</dbReference>
<dbReference type="NCBIfam" id="NF009205">
    <property type="entry name" value="PRK12553.1"/>
    <property type="match status" value="1"/>
</dbReference>
<dbReference type="PANTHER" id="PTHR10381">
    <property type="entry name" value="ATP-DEPENDENT CLP PROTEASE PROTEOLYTIC SUBUNIT"/>
    <property type="match status" value="1"/>
</dbReference>
<dbReference type="PANTHER" id="PTHR10381:SF70">
    <property type="entry name" value="ATP-DEPENDENT CLP PROTEASE PROTEOLYTIC SUBUNIT"/>
    <property type="match status" value="1"/>
</dbReference>
<dbReference type="Pfam" id="PF00574">
    <property type="entry name" value="CLP_protease"/>
    <property type="match status" value="1"/>
</dbReference>
<dbReference type="PRINTS" id="PR00127">
    <property type="entry name" value="CLPPROTEASEP"/>
</dbReference>
<dbReference type="SUPFAM" id="SSF52096">
    <property type="entry name" value="ClpP/crotonase"/>
    <property type="match status" value="1"/>
</dbReference>
<dbReference type="PROSITE" id="PS00382">
    <property type="entry name" value="CLP_PROTEASE_HIS"/>
    <property type="match status" value="1"/>
</dbReference>
<dbReference type="PROSITE" id="PS00381">
    <property type="entry name" value="CLP_PROTEASE_SER"/>
    <property type="match status" value="1"/>
</dbReference>
<keyword id="KW-0963">Cytoplasm</keyword>
<keyword id="KW-0378">Hydrolase</keyword>
<keyword id="KW-0645">Protease</keyword>
<keyword id="KW-0720">Serine protease</keyword>